<evidence type="ECO:0000250" key="1"/>
<evidence type="ECO:0000250" key="2">
    <source>
        <dbReference type="UniProtKB" id="Q9H074"/>
    </source>
</evidence>
<evidence type="ECO:0000256" key="3">
    <source>
        <dbReference type="SAM" id="MobiDB-lite"/>
    </source>
</evidence>
<evidence type="ECO:0000305" key="4"/>
<name>PAIP1_MOUSE</name>
<keyword id="KW-0963">Cytoplasm</keyword>
<keyword id="KW-1185">Reference proteome</keyword>
<keyword id="KW-0810">Translation regulation</keyword>
<proteinExistence type="evidence at protein level"/>
<sequence>MSDSFDRAPEQTKPQRAPPSSQDKIPQQNSESAMAKPQVVVAPVLMSKLSANAPEFYPSGYSSNYTESYEDGCEDYPTLSEYVQDFLNHLTEQPGSFETEIEQFAETLNGWVTTDDALQELVELIYQQATSIPNFSYMGARLCNYLSHHLTISPQSGNFRQLLLQRCRTEYEAKDQAAKGDEVTRKRFHAFVLFLGELYLNLEIKGTNGQVTRADILQVGLRELLNALFSNPMDDNLICAVKLLKLTGSVLEDTWKEKGKTDMEEIIQRIENVVLDANCSRDVKQMLLKLVELRSSNWGRVHATSTYREATPENDPNYFMNEPTFYTSDGVPFTAADPDYQEKYQELLEREDFFPDYEENGTDLSGAGDPYLDDIDDEMDPEIEEAYEKFCLESERKRKQ</sequence>
<gene>
    <name type="primary">Paip1</name>
</gene>
<reference key="1">
    <citation type="journal article" date="2004" name="Genome Res.">
        <title>The status, quality, and expansion of the NIH full-length cDNA project: the Mammalian Gene Collection (MGC).</title>
        <authorList>
            <consortium name="The MGC Project Team"/>
        </authorList>
    </citation>
    <scope>NUCLEOTIDE SEQUENCE [LARGE SCALE MRNA]</scope>
    <source>
        <strain>Czech II</strain>
        <tissue>Mammary tumor</tissue>
    </source>
</reference>
<reference key="2">
    <citation type="submission" date="1999-02" db="EMBL/GenBank/DDBJ databases">
        <title>Mouse oocyte polyA binding protein-interacting protein.</title>
        <authorList>
            <person name="Paynton B.V."/>
        </authorList>
    </citation>
    <scope>NUCLEOTIDE SEQUENCE [MRNA] OF 30-367</scope>
    <source>
        <strain>CB6F1/J</strain>
        <tissue>Oocyte</tissue>
    </source>
</reference>
<reference key="3">
    <citation type="journal article" date="2010" name="Cell">
        <title>A tissue-specific atlas of mouse protein phosphorylation and expression.</title>
        <authorList>
            <person name="Huttlin E.L."/>
            <person name="Jedrychowski M.P."/>
            <person name="Elias J.E."/>
            <person name="Goswami T."/>
            <person name="Rad R."/>
            <person name="Beausoleil S.A."/>
            <person name="Villen J."/>
            <person name="Haas W."/>
            <person name="Sowa M.E."/>
            <person name="Gygi S.P."/>
        </authorList>
    </citation>
    <scope>IDENTIFICATION BY MASS SPECTROMETRY [LARGE SCALE ANALYSIS]</scope>
    <source>
        <tissue>Brain</tissue>
        <tissue>Heart</tissue>
        <tissue>Kidney</tissue>
        <tissue>Liver</tissue>
        <tissue>Lung</tissue>
        <tissue>Spleen</tissue>
        <tissue>Testis</tissue>
    </source>
</reference>
<protein>
    <recommendedName>
        <fullName>Polyadenylate-binding protein-interacting protein 1</fullName>
        <shortName>PABP-interacting protein 1</shortName>
        <shortName>PAIP-1</shortName>
        <shortName>Poly(A)-binding protein-interacting protein 1</shortName>
    </recommendedName>
</protein>
<dbReference type="EMBL" id="BC019726">
    <property type="protein sequence ID" value="AAH19726.1"/>
    <property type="molecule type" value="mRNA"/>
</dbReference>
<dbReference type="EMBL" id="BC051042">
    <property type="protein sequence ID" value="AAH51042.1"/>
    <property type="molecule type" value="mRNA"/>
</dbReference>
<dbReference type="EMBL" id="AF128835">
    <property type="protein sequence ID" value="AAD28259.1"/>
    <property type="molecule type" value="mRNA"/>
</dbReference>
<dbReference type="CCDS" id="CCDS26796.1"/>
<dbReference type="RefSeq" id="NP_663432.1">
    <property type="nucleotide sequence ID" value="NM_145457.5"/>
</dbReference>
<dbReference type="SMR" id="Q8VE62"/>
<dbReference type="BioGRID" id="230055">
    <property type="interactions" value="8"/>
</dbReference>
<dbReference type="ComplexPortal" id="CPX-1078">
    <property type="entry name" value="mCRD-poly(A)-bridging complex"/>
</dbReference>
<dbReference type="CORUM" id="Q8VE62"/>
<dbReference type="FunCoup" id="Q8VE62">
    <property type="interactions" value="3510"/>
</dbReference>
<dbReference type="IntAct" id="Q8VE62">
    <property type="interactions" value="1"/>
</dbReference>
<dbReference type="STRING" id="10090.ENSMUSP00000026520"/>
<dbReference type="GlyGen" id="Q8VE62">
    <property type="glycosylation" value="1 site, 1 N-linked glycan (1 site)"/>
</dbReference>
<dbReference type="iPTMnet" id="Q8VE62"/>
<dbReference type="PhosphoSitePlus" id="Q8VE62"/>
<dbReference type="SwissPalm" id="Q8VE62"/>
<dbReference type="PaxDb" id="10090-ENSMUSP00000026520"/>
<dbReference type="PeptideAtlas" id="Q8VE62"/>
<dbReference type="ProteomicsDB" id="294375"/>
<dbReference type="Pumba" id="Q8VE62"/>
<dbReference type="Antibodypedia" id="10789">
    <property type="antibodies" value="203 antibodies from 28 providers"/>
</dbReference>
<dbReference type="DNASU" id="218693"/>
<dbReference type="Ensembl" id="ENSMUST00000026520.14">
    <property type="protein sequence ID" value="ENSMUSP00000026520.8"/>
    <property type="gene ID" value="ENSMUSG00000025451.16"/>
</dbReference>
<dbReference type="GeneID" id="218693"/>
<dbReference type="KEGG" id="mmu:218693"/>
<dbReference type="UCSC" id="uc007rzc.2">
    <property type="organism name" value="mouse"/>
</dbReference>
<dbReference type="AGR" id="MGI:2384993"/>
<dbReference type="CTD" id="10605"/>
<dbReference type="MGI" id="MGI:2384993">
    <property type="gene designation" value="Paip1"/>
</dbReference>
<dbReference type="VEuPathDB" id="HostDB:ENSMUSG00000025451"/>
<dbReference type="eggNOG" id="KOG0401">
    <property type="taxonomic scope" value="Eukaryota"/>
</dbReference>
<dbReference type="GeneTree" id="ENSGT00940000153432"/>
<dbReference type="InParanoid" id="Q8VE62"/>
<dbReference type="OrthoDB" id="8171816at2759"/>
<dbReference type="PhylomeDB" id="Q8VE62"/>
<dbReference type="TreeFam" id="TF325625"/>
<dbReference type="Reactome" id="R-MMU-429947">
    <property type="pathway name" value="Deadenylation of mRNA"/>
</dbReference>
<dbReference type="BioGRID-ORCS" id="218693">
    <property type="hits" value="6 hits in 77 CRISPR screens"/>
</dbReference>
<dbReference type="ChiTaRS" id="Paip1">
    <property type="organism name" value="mouse"/>
</dbReference>
<dbReference type="PRO" id="PR:Q8VE62"/>
<dbReference type="Proteomes" id="UP000000589">
    <property type="component" value="Chromosome 13"/>
</dbReference>
<dbReference type="RNAct" id="Q8VE62">
    <property type="molecule type" value="protein"/>
</dbReference>
<dbReference type="Bgee" id="ENSMUSG00000025451">
    <property type="expression patterns" value="Expressed in animal zygote and 249 other cell types or tissues"/>
</dbReference>
<dbReference type="ExpressionAtlas" id="Q8VE62">
    <property type="expression patterns" value="baseline and differential"/>
</dbReference>
<dbReference type="GO" id="GO:0005829">
    <property type="term" value="C:cytosol"/>
    <property type="evidence" value="ECO:0000266"/>
    <property type="project" value="ComplexPortal"/>
</dbReference>
<dbReference type="GO" id="GO:0106002">
    <property type="term" value="C:mCRD-mediated mRNA stability complex"/>
    <property type="evidence" value="ECO:0000266"/>
    <property type="project" value="ComplexPortal"/>
</dbReference>
<dbReference type="GO" id="GO:0003723">
    <property type="term" value="F:RNA binding"/>
    <property type="evidence" value="ECO:0007669"/>
    <property type="project" value="InterPro"/>
</dbReference>
<dbReference type="GO" id="GO:0070934">
    <property type="term" value="P:CRD-mediated mRNA stabilization"/>
    <property type="evidence" value="ECO:0000266"/>
    <property type="project" value="ComplexPortal"/>
</dbReference>
<dbReference type="GO" id="GO:1900152">
    <property type="term" value="P:negative regulation of nuclear-transcribed mRNA catabolic process, deadenylation-dependent decay"/>
    <property type="evidence" value="ECO:0000266"/>
    <property type="project" value="ComplexPortal"/>
</dbReference>
<dbReference type="GO" id="GO:2000767">
    <property type="term" value="P:positive regulation of cytoplasmic translation"/>
    <property type="evidence" value="ECO:0000266"/>
    <property type="project" value="ComplexPortal"/>
</dbReference>
<dbReference type="FunFam" id="1.25.40.180:FF:000016">
    <property type="entry name" value="polyadenylate-binding protein-interacting protein 1 isoform X1"/>
    <property type="match status" value="1"/>
</dbReference>
<dbReference type="Gene3D" id="1.25.40.180">
    <property type="match status" value="1"/>
</dbReference>
<dbReference type="InterPro" id="IPR016024">
    <property type="entry name" value="ARM-type_fold"/>
</dbReference>
<dbReference type="InterPro" id="IPR003890">
    <property type="entry name" value="MIF4G-like_typ-3"/>
</dbReference>
<dbReference type="InterPro" id="IPR051367">
    <property type="entry name" value="mRNA_TranslReg/HistoneTransl"/>
</dbReference>
<dbReference type="InterPro" id="IPR009818">
    <property type="entry name" value="PAM2_motif"/>
</dbReference>
<dbReference type="PANTHER" id="PTHR23254">
    <property type="entry name" value="EIF4G DOMAIN PROTEIN"/>
    <property type="match status" value="1"/>
</dbReference>
<dbReference type="PANTHER" id="PTHR23254:SF15">
    <property type="entry name" value="POLYADENYLATE-BINDING PROTEIN-INTERACTING PROTEIN 1"/>
    <property type="match status" value="1"/>
</dbReference>
<dbReference type="Pfam" id="PF02854">
    <property type="entry name" value="MIF4G"/>
    <property type="match status" value="1"/>
</dbReference>
<dbReference type="Pfam" id="PF07145">
    <property type="entry name" value="PAM2"/>
    <property type="match status" value="1"/>
</dbReference>
<dbReference type="SMART" id="SM00543">
    <property type="entry name" value="MIF4G"/>
    <property type="match status" value="1"/>
</dbReference>
<dbReference type="SUPFAM" id="SSF48371">
    <property type="entry name" value="ARM repeat"/>
    <property type="match status" value="1"/>
</dbReference>
<accession>Q8VE62</accession>
<accession>Q9WUC9</accession>
<organism>
    <name type="scientific">Mus musculus</name>
    <name type="common">Mouse</name>
    <dbReference type="NCBI Taxonomy" id="10090"/>
    <lineage>
        <taxon>Eukaryota</taxon>
        <taxon>Metazoa</taxon>
        <taxon>Chordata</taxon>
        <taxon>Craniata</taxon>
        <taxon>Vertebrata</taxon>
        <taxon>Euteleostomi</taxon>
        <taxon>Mammalia</taxon>
        <taxon>Eutheria</taxon>
        <taxon>Euarchontoglires</taxon>
        <taxon>Glires</taxon>
        <taxon>Rodentia</taxon>
        <taxon>Myomorpha</taxon>
        <taxon>Muroidea</taxon>
        <taxon>Muridae</taxon>
        <taxon>Murinae</taxon>
        <taxon>Mus</taxon>
        <taxon>Mus</taxon>
    </lineage>
</organism>
<feature type="chain" id="PRO_0000058178" description="Polyadenylate-binding protein-interacting protein 1">
    <location>
        <begin position="1"/>
        <end position="400"/>
    </location>
</feature>
<feature type="domain" description="MIF4G">
    <location>
        <begin position="80"/>
        <end position="297"/>
    </location>
</feature>
<feature type="region of interest" description="Disordered" evidence="3">
    <location>
        <begin position="1"/>
        <end position="36"/>
    </location>
</feature>
<feature type="region of interest" description="PABPC1-interacting motif-2 (PAM2)" evidence="2">
    <location>
        <begin position="37"/>
        <end position="64"/>
    </location>
</feature>
<feature type="region of interest" description="PAIP1 middle domain (PAIP1M)" evidence="2">
    <location>
        <begin position="78"/>
        <end position="296"/>
    </location>
</feature>
<feature type="region of interest" description="Disordered" evidence="3">
    <location>
        <begin position="356"/>
        <end position="376"/>
    </location>
</feature>
<feature type="region of interest" description="PABPC1-interacting motif-1 (PAM1)" evidence="2">
    <location>
        <begin position="361"/>
        <end position="400"/>
    </location>
</feature>
<feature type="compositionally biased region" description="Basic and acidic residues" evidence="3">
    <location>
        <begin position="1"/>
        <end position="10"/>
    </location>
</feature>
<feature type="compositionally biased region" description="Polar residues" evidence="3">
    <location>
        <begin position="12"/>
        <end position="32"/>
    </location>
</feature>
<feature type="sequence conflict" description="In Ref. 2; AAD28259." evidence="4" ref="2">
    <original>A</original>
    <variation>V</variation>
    <location>
        <position position="42"/>
    </location>
</feature>
<comment type="function">
    <text evidence="1">Acts as a coactivator in the regulation of translation initiation of poly(A)-containing mRNAs. Its stimulatory activity on translation is mediated via its action on PABPC1. Competes with PAIP2 for binding to PABPC1. Its association with EIF4A and PABPC1 may potentiate contacts between mRNA termini. May also be involved in translationally coupled mRNA turnover. Implicated with other RNA-binding proteins in the cytoplasmic deadenylation/translational and decay interplay of the FOS mRNA mediated by the major coding-region determinant of instability (mCRD) domain (By similarity).</text>
</comment>
<comment type="subunit">
    <text evidence="1">Interacts with the RRM1-RRM2 and C-terminus regions of PABPC1 in a 1:1 stoichiometry. Interacts with EIF4A (By similarity).</text>
</comment>
<comment type="subcellular location">
    <subcellularLocation>
        <location evidence="4">Cytoplasm</location>
    </subcellularLocation>
</comment>
<comment type="domain">
    <text evidence="1">Only the PABPC1-interacting motif-1 (PAM1) stimulates translation initiation.</text>
</comment>